<protein>
    <recommendedName>
        <fullName evidence="1">Small ribosomal subunit protein uS14</fullName>
    </recommendedName>
    <alternativeName>
        <fullName evidence="2">30S ribosomal protein S14 type Z</fullName>
    </alternativeName>
</protein>
<comment type="function">
    <text evidence="1">Binds 16S rRNA, required for the assembly of 30S particles.</text>
</comment>
<comment type="cofactor">
    <cofactor evidence="1">
        <name>Zn(2+)</name>
        <dbReference type="ChEBI" id="CHEBI:29105"/>
    </cofactor>
    <text evidence="1">Binds 1 zinc ion per subunit.</text>
</comment>
<comment type="subunit">
    <text evidence="1">Part of the 30S ribosomal subunit.</text>
</comment>
<comment type="similarity">
    <text evidence="1">Belongs to the universal ribosomal protein uS14 family. Zinc-binding uS14 subfamily.</text>
</comment>
<proteinExistence type="inferred from homology"/>
<name>RS14Z_METJA</name>
<accession>P54110</accession>
<sequence length="53" mass="6192">MAKKPWKKKYGYGIRPCQRCGHVGPGLIRKYGLNLCRQCFREIAHKLGFKKLD</sequence>
<evidence type="ECO:0000255" key="1">
    <source>
        <dbReference type="HAMAP-Rule" id="MF_01364"/>
    </source>
</evidence>
<evidence type="ECO:0000305" key="2"/>
<organism>
    <name type="scientific">Methanocaldococcus jannaschii (strain ATCC 43067 / DSM 2661 / JAL-1 / JCM 10045 / NBRC 100440)</name>
    <name type="common">Methanococcus jannaschii</name>
    <dbReference type="NCBI Taxonomy" id="243232"/>
    <lineage>
        <taxon>Archaea</taxon>
        <taxon>Methanobacteriati</taxon>
        <taxon>Methanobacteriota</taxon>
        <taxon>Methanomada group</taxon>
        <taxon>Methanococci</taxon>
        <taxon>Methanococcales</taxon>
        <taxon>Methanocaldococcaceae</taxon>
        <taxon>Methanocaldococcus</taxon>
    </lineage>
</organism>
<reference key="1">
    <citation type="journal article" date="1996" name="Science">
        <title>Complete genome sequence of the methanogenic archaeon, Methanococcus jannaschii.</title>
        <authorList>
            <person name="Bult C.J."/>
            <person name="White O."/>
            <person name="Olsen G.J."/>
            <person name="Zhou L."/>
            <person name="Fleischmann R.D."/>
            <person name="Sutton G.G."/>
            <person name="Blake J.A."/>
            <person name="FitzGerald L.M."/>
            <person name="Clayton R.A."/>
            <person name="Gocayne J.D."/>
            <person name="Kerlavage A.R."/>
            <person name="Dougherty B.A."/>
            <person name="Tomb J.-F."/>
            <person name="Adams M.D."/>
            <person name="Reich C.I."/>
            <person name="Overbeek R."/>
            <person name="Kirkness E.F."/>
            <person name="Weinstock K.G."/>
            <person name="Merrick J.M."/>
            <person name="Glodek A."/>
            <person name="Scott J.L."/>
            <person name="Geoghagen N.S.M."/>
            <person name="Weidman J.F."/>
            <person name="Fuhrmann J.L."/>
            <person name="Nguyen D."/>
            <person name="Utterback T.R."/>
            <person name="Kelley J.M."/>
            <person name="Peterson J.D."/>
            <person name="Sadow P.W."/>
            <person name="Hanna M.C."/>
            <person name="Cotton M.D."/>
            <person name="Roberts K.M."/>
            <person name="Hurst M.A."/>
            <person name="Kaine B.P."/>
            <person name="Borodovsky M."/>
            <person name="Klenk H.-P."/>
            <person name="Fraser C.M."/>
            <person name="Smith H.O."/>
            <person name="Woese C.R."/>
            <person name="Venter J.C."/>
        </authorList>
    </citation>
    <scope>NUCLEOTIDE SEQUENCE [LARGE SCALE GENOMIC DNA]</scope>
    <source>
        <strain>ATCC 43067 / DSM 2661 / JAL-1 / JCM 10045 / NBRC 100440</strain>
    </source>
</reference>
<reference key="2">
    <citation type="unpublished observations" date="1996-08">
        <authorList>
            <person name="Veuthey A.-L."/>
            <person name="Bairoch A."/>
        </authorList>
    </citation>
    <scope>IDENTIFICATION</scope>
</reference>
<feature type="chain" id="PRO_0000130992" description="Small ribosomal subunit protein uS14">
    <location>
        <begin position="1"/>
        <end position="53"/>
    </location>
</feature>
<feature type="binding site" evidence="1">
    <location>
        <position position="17"/>
    </location>
    <ligand>
        <name>Zn(2+)</name>
        <dbReference type="ChEBI" id="CHEBI:29105"/>
    </ligand>
</feature>
<feature type="binding site" evidence="1">
    <location>
        <position position="20"/>
    </location>
    <ligand>
        <name>Zn(2+)</name>
        <dbReference type="ChEBI" id="CHEBI:29105"/>
    </ligand>
</feature>
<feature type="binding site" evidence="1">
    <location>
        <position position="36"/>
    </location>
    <ligand>
        <name>Zn(2+)</name>
        <dbReference type="ChEBI" id="CHEBI:29105"/>
    </ligand>
</feature>
<feature type="binding site" evidence="1">
    <location>
        <position position="39"/>
    </location>
    <ligand>
        <name>Zn(2+)</name>
        <dbReference type="ChEBI" id="CHEBI:29105"/>
    </ligand>
</feature>
<keyword id="KW-0479">Metal-binding</keyword>
<keyword id="KW-1185">Reference proteome</keyword>
<keyword id="KW-0687">Ribonucleoprotein</keyword>
<keyword id="KW-0689">Ribosomal protein</keyword>
<keyword id="KW-0694">RNA-binding</keyword>
<keyword id="KW-0699">rRNA-binding</keyword>
<keyword id="KW-0862">Zinc</keyword>
<gene>
    <name evidence="1" type="primary">rps14</name>
    <name type="ordered locus">MJ0469.1</name>
</gene>
<dbReference type="EMBL" id="L77117">
    <property type="status" value="NOT_ANNOTATED_CDS"/>
    <property type="molecule type" value="Genomic_DNA"/>
</dbReference>
<dbReference type="RefSeq" id="WP_010869970.1">
    <property type="nucleotide sequence ID" value="NC_000909.1"/>
</dbReference>
<dbReference type="SMR" id="P54110"/>
<dbReference type="FunCoup" id="P54110">
    <property type="interactions" value="134"/>
</dbReference>
<dbReference type="InParanoid" id="P54110"/>
<dbReference type="OrthoDB" id="5615at2157"/>
<dbReference type="PhylomeDB" id="P54110"/>
<dbReference type="Proteomes" id="UP000000805">
    <property type="component" value="Chromosome"/>
</dbReference>
<dbReference type="GO" id="GO:0022627">
    <property type="term" value="C:cytosolic small ribosomal subunit"/>
    <property type="evidence" value="ECO:0000318"/>
    <property type="project" value="GO_Central"/>
</dbReference>
<dbReference type="GO" id="GO:0019843">
    <property type="term" value="F:rRNA binding"/>
    <property type="evidence" value="ECO:0007669"/>
    <property type="project" value="UniProtKB-UniRule"/>
</dbReference>
<dbReference type="GO" id="GO:0003735">
    <property type="term" value="F:structural constituent of ribosome"/>
    <property type="evidence" value="ECO:0000318"/>
    <property type="project" value="GO_Central"/>
</dbReference>
<dbReference type="GO" id="GO:0008270">
    <property type="term" value="F:zinc ion binding"/>
    <property type="evidence" value="ECO:0000318"/>
    <property type="project" value="GO_Central"/>
</dbReference>
<dbReference type="GO" id="GO:0002181">
    <property type="term" value="P:cytoplasmic translation"/>
    <property type="evidence" value="ECO:0000318"/>
    <property type="project" value="GO_Central"/>
</dbReference>
<dbReference type="FunFam" id="4.10.830.10:FF:000002">
    <property type="entry name" value="40S ribosomal protein S29"/>
    <property type="match status" value="1"/>
</dbReference>
<dbReference type="Gene3D" id="4.10.830.10">
    <property type="entry name" value="30s Ribosomal Protein S14, Chain N"/>
    <property type="match status" value="1"/>
</dbReference>
<dbReference type="HAMAP" id="MF_01364_A">
    <property type="entry name" value="Ribosomal_uS14_2_A"/>
    <property type="match status" value="1"/>
</dbReference>
<dbReference type="InterPro" id="IPR001209">
    <property type="entry name" value="Ribosomal_uS14"/>
</dbReference>
<dbReference type="InterPro" id="IPR023676">
    <property type="entry name" value="Ribosomal_uS14_arc"/>
</dbReference>
<dbReference type="InterPro" id="IPR018271">
    <property type="entry name" value="Ribosomal_uS14_CS"/>
</dbReference>
<dbReference type="InterPro" id="IPR039744">
    <property type="entry name" value="RIbosomal_uS14_euk_arc"/>
</dbReference>
<dbReference type="InterPro" id="IPR043140">
    <property type="entry name" value="Ribosomal_uS14_sf"/>
</dbReference>
<dbReference type="NCBIfam" id="NF004424">
    <property type="entry name" value="PRK05766.1"/>
    <property type="match status" value="1"/>
</dbReference>
<dbReference type="PANTHER" id="PTHR12010">
    <property type="entry name" value="40S RIBOSOMAL PROTEIN S29"/>
    <property type="match status" value="1"/>
</dbReference>
<dbReference type="PANTHER" id="PTHR12010:SF2">
    <property type="entry name" value="40S RIBOSOMAL PROTEIN S29"/>
    <property type="match status" value="1"/>
</dbReference>
<dbReference type="Pfam" id="PF00253">
    <property type="entry name" value="Ribosomal_S14"/>
    <property type="match status" value="1"/>
</dbReference>
<dbReference type="PROSITE" id="PS00527">
    <property type="entry name" value="RIBOSOMAL_S14"/>
    <property type="match status" value="1"/>
</dbReference>